<keyword id="KW-0025">Alternative splicing</keyword>
<keyword id="KW-0106">Calcium</keyword>
<keyword id="KW-0325">Glycoprotein</keyword>
<keyword id="KW-0378">Hydrolase</keyword>
<keyword id="KW-0458">Lysosome</keyword>
<keyword id="KW-0479">Metal-binding</keyword>
<keyword id="KW-1267">Proteomics identification</keyword>
<keyword id="KW-1185">Reference proteome</keyword>
<keyword id="KW-0732">Signal</keyword>
<name>ARSD_HUMAN</name>
<accession>P51689</accession>
<accession>Q9UHJ8</accession>
<gene>
    <name type="primary">ARSD</name>
</gene>
<feature type="signal peptide" evidence="2">
    <location>
        <begin position="1"/>
        <end position="33"/>
    </location>
</feature>
<feature type="chain" id="PRO_0000033424" description="Arylsulfatase D">
    <location>
        <begin position="34"/>
        <end position="593"/>
    </location>
</feature>
<feature type="active site" description="Nucleophile" evidence="1">
    <location>
        <position position="89"/>
    </location>
</feature>
<feature type="active site" evidence="1">
    <location>
        <position position="150"/>
    </location>
</feature>
<feature type="binding site" evidence="1">
    <location>
        <position position="49"/>
    </location>
    <ligand>
        <name>Ca(2+)</name>
        <dbReference type="ChEBI" id="CHEBI:29108"/>
    </ligand>
</feature>
<feature type="binding site" evidence="1">
    <location>
        <position position="50"/>
    </location>
    <ligand>
        <name>Ca(2+)</name>
        <dbReference type="ChEBI" id="CHEBI:29108"/>
    </ligand>
</feature>
<feature type="binding site" description="via 3-oxoalanine" evidence="1">
    <location>
        <position position="89"/>
    </location>
    <ligand>
        <name>Ca(2+)</name>
        <dbReference type="ChEBI" id="CHEBI:29108"/>
    </ligand>
</feature>
<feature type="binding site" evidence="1">
    <location>
        <position position="148"/>
    </location>
    <ligand>
        <name>substrate</name>
    </ligand>
</feature>
<feature type="binding site" evidence="1">
    <location>
        <position position="304"/>
    </location>
    <ligand>
        <name>substrate</name>
    </ligand>
</feature>
<feature type="binding site" evidence="1">
    <location>
        <position position="356"/>
    </location>
    <ligand>
        <name>Ca(2+)</name>
        <dbReference type="ChEBI" id="CHEBI:29108"/>
    </ligand>
</feature>
<feature type="binding site" evidence="1">
    <location>
        <position position="357"/>
    </location>
    <ligand>
        <name>Ca(2+)</name>
        <dbReference type="ChEBI" id="CHEBI:29108"/>
    </ligand>
</feature>
<feature type="binding site" evidence="1">
    <location>
        <position position="381"/>
    </location>
    <ligand>
        <name>substrate</name>
    </ligand>
</feature>
<feature type="modified residue" description="3-oxoalanine (Cys)" evidence="1">
    <location>
        <position position="89"/>
    </location>
</feature>
<feature type="glycosylation site" description="N-linked (GlcNAc...) asparagine" evidence="2">
    <location>
        <position position="61"/>
    </location>
</feature>
<feature type="glycosylation site" description="N-linked (GlcNAc...) asparagine" evidence="2">
    <location>
        <position position="128"/>
    </location>
</feature>
<feature type="glycosylation site" description="N-linked (GlcNAc...) asparagine" evidence="4">
    <location>
        <position position="347"/>
    </location>
</feature>
<feature type="splice variant" id="VSP_015798" description="In isoform 2." evidence="5">
    <original>GKVLNAIEDNGLKNSTFTYFTSDHGGHLEARDGHSQLGGWNGIYKGGKG</original>
    <variation>ASDFMSSSEVTESEAIKLMFRTMQRRCLPSMAFKKPWRGPVRLQILKRA</variation>
    <location>
        <begin position="334"/>
        <end position="382"/>
    </location>
</feature>
<feature type="splice variant" id="VSP_015799" description="In isoform 2." evidence="5">
    <location>
        <begin position="383"/>
        <end position="593"/>
    </location>
</feature>
<feature type="splice variant" id="VSP_035667" description="In isoform 3." evidence="6">
    <location>
        <begin position="504"/>
        <end position="593"/>
    </location>
</feature>
<feature type="sequence variant" id="VAR_052508" description="In dbSNP:rs211653." evidence="3">
    <original>S</original>
    <variation>C</variation>
    <location>
        <position position="224"/>
    </location>
</feature>
<feature type="sequence variant" id="VAR_052509" description="In dbSNP:rs2229557.">
    <original>V</original>
    <variation>I</variation>
    <location>
        <position position="500"/>
    </location>
</feature>
<feature type="sequence variant" id="VAR_052510" description="In dbSNP:rs2228431.">
    <original>M</original>
    <variation>T</variation>
    <location>
        <position position="564"/>
    </location>
</feature>
<dbReference type="EC" id="3.1.6.-"/>
<dbReference type="EMBL" id="X83572">
    <property type="protein sequence ID" value="CAA58555.1"/>
    <property type="status" value="ALT_FRAME"/>
    <property type="molecule type" value="mRNA"/>
</dbReference>
<dbReference type="EMBL" id="AF160499">
    <property type="protein sequence ID" value="AAF22253.1"/>
    <property type="molecule type" value="mRNA"/>
</dbReference>
<dbReference type="EMBL" id="AC005295">
    <property type="status" value="NOT_ANNOTATED_CDS"/>
    <property type="molecule type" value="Genomic_DNA"/>
</dbReference>
<dbReference type="EMBL" id="BC020229">
    <property type="status" value="NOT_ANNOTATED_CDS"/>
    <property type="molecule type" value="mRNA"/>
</dbReference>
<dbReference type="CCDS" id="CCDS35196.1">
    <molecule id="P51689-1"/>
</dbReference>
<dbReference type="PIR" id="I37186">
    <property type="entry name" value="I37186"/>
</dbReference>
<dbReference type="RefSeq" id="NP_001660.2">
    <molecule id="P51689-1"/>
    <property type="nucleotide sequence ID" value="NM_001669.4"/>
</dbReference>
<dbReference type="RefSeq" id="NP_033667.2">
    <property type="nucleotide sequence ID" value="NM_009589.3"/>
</dbReference>
<dbReference type="SMR" id="P51689"/>
<dbReference type="BioGRID" id="106907">
    <property type="interactions" value="3"/>
</dbReference>
<dbReference type="FunCoup" id="P51689">
    <property type="interactions" value="98"/>
</dbReference>
<dbReference type="IntAct" id="P51689">
    <property type="interactions" value="1"/>
</dbReference>
<dbReference type="STRING" id="9606.ENSP00000370546"/>
<dbReference type="GlyConnect" id="1017">
    <property type="glycosylation" value="5 N-Linked glycans (2 sites)"/>
</dbReference>
<dbReference type="GlyCosmos" id="P51689">
    <property type="glycosylation" value="3 sites, 4 glycans"/>
</dbReference>
<dbReference type="GlyGen" id="P51689">
    <property type="glycosylation" value="4 sites, 9 N-linked glycans (2 sites), 1 O-linked glycan (1 site)"/>
</dbReference>
<dbReference type="iPTMnet" id="P51689"/>
<dbReference type="PhosphoSitePlus" id="P51689"/>
<dbReference type="SwissPalm" id="P51689"/>
<dbReference type="BioMuta" id="ARSD"/>
<dbReference type="DMDM" id="212276422"/>
<dbReference type="jPOST" id="P51689"/>
<dbReference type="MassIVE" id="P51689"/>
<dbReference type="PaxDb" id="9606-ENSP00000370546"/>
<dbReference type="PeptideAtlas" id="P51689"/>
<dbReference type="ProteomicsDB" id="56374">
    <molecule id="P51689-1"/>
</dbReference>
<dbReference type="ProteomicsDB" id="56375">
    <molecule id="P51689-2"/>
</dbReference>
<dbReference type="ProteomicsDB" id="56376">
    <molecule id="P51689-3"/>
</dbReference>
<dbReference type="Antibodypedia" id="441">
    <property type="antibodies" value="164 antibodies from 29 providers"/>
</dbReference>
<dbReference type="DNASU" id="414"/>
<dbReference type="Ensembl" id="ENST00000381154.6">
    <molecule id="P51689-1"/>
    <property type="protein sequence ID" value="ENSP00000370546.1"/>
    <property type="gene ID" value="ENSG00000006756.16"/>
</dbReference>
<dbReference type="GeneID" id="414"/>
<dbReference type="KEGG" id="hsa:414"/>
<dbReference type="MANE-Select" id="ENST00000381154.6">
    <property type="protein sequence ID" value="ENSP00000370546.1"/>
    <property type="RefSeq nucleotide sequence ID" value="NM_001669.4"/>
    <property type="RefSeq protein sequence ID" value="NP_001660.2"/>
</dbReference>
<dbReference type="UCSC" id="uc004cqy.4">
    <molecule id="P51689-1"/>
    <property type="organism name" value="human"/>
</dbReference>
<dbReference type="AGR" id="HGNC:717"/>
<dbReference type="CTD" id="414"/>
<dbReference type="DisGeNET" id="414"/>
<dbReference type="GeneCards" id="ARSD"/>
<dbReference type="HGNC" id="HGNC:717">
    <property type="gene designation" value="ARSD"/>
</dbReference>
<dbReference type="HPA" id="ENSG00000006756">
    <property type="expression patterns" value="Low tissue specificity"/>
</dbReference>
<dbReference type="MIM" id="300002">
    <property type="type" value="gene"/>
</dbReference>
<dbReference type="neXtProt" id="NX_P51689"/>
<dbReference type="OpenTargets" id="ENSG00000006756"/>
<dbReference type="PharmGKB" id="PA25008"/>
<dbReference type="VEuPathDB" id="HostDB:ENSG00000006756"/>
<dbReference type="eggNOG" id="KOG3867">
    <property type="taxonomic scope" value="Eukaryota"/>
</dbReference>
<dbReference type="GeneTree" id="ENSGT00940000161140"/>
<dbReference type="HOGENOM" id="CLU_006332_13_4_1"/>
<dbReference type="InParanoid" id="P51689"/>
<dbReference type="OMA" id="AAKWRDW"/>
<dbReference type="OrthoDB" id="103349at2759"/>
<dbReference type="PAN-GO" id="P51689">
    <property type="GO annotations" value="1 GO annotation based on evolutionary models"/>
</dbReference>
<dbReference type="PhylomeDB" id="P51689"/>
<dbReference type="TreeFam" id="TF314186"/>
<dbReference type="PathwayCommons" id="P51689"/>
<dbReference type="Reactome" id="R-HSA-1663150">
    <property type="pathway name" value="The activation of arylsulfatases"/>
</dbReference>
<dbReference type="Reactome" id="R-HSA-9840310">
    <property type="pathway name" value="Glycosphingolipid catabolism"/>
</dbReference>
<dbReference type="BioGRID-ORCS" id="414">
    <property type="hits" value="9 hits in 767 CRISPR screens"/>
</dbReference>
<dbReference type="ChiTaRS" id="ARSD">
    <property type="organism name" value="human"/>
</dbReference>
<dbReference type="GenomeRNAi" id="414"/>
<dbReference type="Pharos" id="P51689">
    <property type="development level" value="Tbio"/>
</dbReference>
<dbReference type="PRO" id="PR:P51689"/>
<dbReference type="Proteomes" id="UP000005640">
    <property type="component" value="Chromosome X"/>
</dbReference>
<dbReference type="RNAct" id="P51689">
    <property type="molecule type" value="protein"/>
</dbReference>
<dbReference type="Bgee" id="ENSG00000006756">
    <property type="expression patterns" value="Expressed in renal medulla and 184 other cell types or tissues"/>
</dbReference>
<dbReference type="ExpressionAtlas" id="P51689">
    <property type="expression patterns" value="baseline and differential"/>
</dbReference>
<dbReference type="GO" id="GO:0005788">
    <property type="term" value="C:endoplasmic reticulum lumen"/>
    <property type="evidence" value="ECO:0000304"/>
    <property type="project" value="Reactome"/>
</dbReference>
<dbReference type="GO" id="GO:0005764">
    <property type="term" value="C:lysosome"/>
    <property type="evidence" value="ECO:0007669"/>
    <property type="project" value="UniProtKB-SubCell"/>
</dbReference>
<dbReference type="GO" id="GO:0004065">
    <property type="term" value="F:arylsulfatase activity"/>
    <property type="evidence" value="ECO:0000318"/>
    <property type="project" value="GO_Central"/>
</dbReference>
<dbReference type="GO" id="GO:0046872">
    <property type="term" value="F:metal ion binding"/>
    <property type="evidence" value="ECO:0007669"/>
    <property type="project" value="UniProtKB-KW"/>
</dbReference>
<dbReference type="FunFam" id="1.10.287.550:FF:000001">
    <property type="entry name" value="Arylsulfatase E"/>
    <property type="match status" value="1"/>
</dbReference>
<dbReference type="FunFam" id="3.30.1120.10:FF:000001">
    <property type="entry name" value="Arylsulfatase E"/>
    <property type="match status" value="1"/>
</dbReference>
<dbReference type="FunFam" id="3.40.720.10:FF:000233">
    <property type="entry name" value="Predicted protein"/>
    <property type="match status" value="1"/>
</dbReference>
<dbReference type="FunFam" id="3.40.720.10:FF:000174">
    <property type="entry name" value="Uncharacterized protein"/>
    <property type="match status" value="1"/>
</dbReference>
<dbReference type="Gene3D" id="3.30.1120.10">
    <property type="match status" value="1"/>
</dbReference>
<dbReference type="Gene3D" id="3.40.720.10">
    <property type="entry name" value="Alkaline Phosphatase, subunit A"/>
    <property type="match status" value="1"/>
</dbReference>
<dbReference type="Gene3D" id="1.10.287.550">
    <property type="entry name" value="Helix hairpin bin"/>
    <property type="match status" value="1"/>
</dbReference>
<dbReference type="InterPro" id="IPR017850">
    <property type="entry name" value="Alkaline_phosphatase_core_sf"/>
</dbReference>
<dbReference type="InterPro" id="IPR050738">
    <property type="entry name" value="Sulfatase"/>
</dbReference>
<dbReference type="InterPro" id="IPR024607">
    <property type="entry name" value="Sulfatase_CS"/>
</dbReference>
<dbReference type="InterPro" id="IPR000917">
    <property type="entry name" value="Sulfatase_N"/>
</dbReference>
<dbReference type="PANTHER" id="PTHR42693:SF5">
    <property type="entry name" value="ARYLSULFATASE D"/>
    <property type="match status" value="1"/>
</dbReference>
<dbReference type="PANTHER" id="PTHR42693">
    <property type="entry name" value="ARYLSULFATASE FAMILY MEMBER"/>
    <property type="match status" value="1"/>
</dbReference>
<dbReference type="Pfam" id="PF00884">
    <property type="entry name" value="Sulfatase"/>
    <property type="match status" value="1"/>
</dbReference>
<dbReference type="Pfam" id="PF14707">
    <property type="entry name" value="Sulfatase_C"/>
    <property type="match status" value="1"/>
</dbReference>
<dbReference type="SUPFAM" id="SSF53649">
    <property type="entry name" value="Alkaline phosphatase-like"/>
    <property type="match status" value="1"/>
</dbReference>
<dbReference type="PROSITE" id="PS00523">
    <property type="entry name" value="SULFATASE_1"/>
    <property type="match status" value="1"/>
</dbReference>
<dbReference type="PROSITE" id="PS00149">
    <property type="entry name" value="SULFATASE_2"/>
    <property type="match status" value="1"/>
</dbReference>
<comment type="cofactor">
    <cofactor evidence="1">
        <name>Ca(2+)</name>
        <dbReference type="ChEBI" id="CHEBI:29108"/>
    </cofactor>
    <text evidence="1">Binds 1 Ca(2+) ion per subunit.</text>
</comment>
<comment type="subcellular location">
    <subcellularLocation>
        <location evidence="7">Lysosome</location>
    </subcellularLocation>
</comment>
<comment type="alternative products">
    <event type="alternative splicing"/>
    <isoform>
        <id>P51689-1</id>
        <name>1</name>
        <sequence type="displayed"/>
    </isoform>
    <isoform>
        <id>P51689-2</id>
        <name>2</name>
        <name>Beta</name>
        <sequence type="described" ref="VSP_015798 VSP_015799"/>
    </isoform>
    <isoform>
        <id>P51689-3</id>
        <name>3</name>
        <name>Alpha</name>
        <sequence type="described" ref="VSP_035667"/>
    </isoform>
</comment>
<comment type="tissue specificity">
    <text>Expressed in the pancreas, kidney, liver, lung, placenta, brain and heart.</text>
</comment>
<comment type="PTM">
    <text evidence="1">The conversion to 3-oxoalanine (also known as C-formylglycine, FGly), of a serine or cysteine residue in prokaryotes and of a cysteine residue in eukaryotes, is critical for catalytic activity.</text>
</comment>
<comment type="similarity">
    <text evidence="7">Belongs to the sulfatase family.</text>
</comment>
<comment type="sequence caution" evidence="7">
    <conflict type="frameshift">
        <sequence resource="EMBL-CDS" id="CAA58555"/>
    </conflict>
</comment>
<proteinExistence type="evidence at protein level"/>
<protein>
    <recommendedName>
        <fullName>Arylsulfatase D</fullName>
        <shortName>ASD</shortName>
        <ecNumber>3.1.6.-</ecNumber>
    </recommendedName>
</protein>
<sequence length="593" mass="64860">MRSAARRGRAAPAARDSLPVLLFLCLLLKTCEPKTANAFKPNILLIMADDLGTGDLGCYGNNTLRTPNIDQLAEEGVRLTQHLAAAPLCTPSRAAFLTGRHSFRSGMDASNGYRALQWNAGSGGLPENETTFARILQQHGYATGLIGKWHQGVNCASRGDHCHHPLNHGFDYFYGMPFTLTNDCDPGRPPEVDAALRAQLWGYTQFLALGILTLAAGQTCGFFSVSARAVTGMAGVGCLFFISWYSSFGFVRRWNCILMRNHDVTEQPMVLEKTASLMLKEAVSYIERHKHGPFLLFLSLLHVHIPLVTTSAFLGKSQHGLYGDNVEEMDWLIGKVLNAIEDNGLKNSTFTYFTSDHGGHLEARDGHSQLGGWNGIYKGGKGMGGWEGGIRVPGIFHWPGVLPAGRVIGEPTSLMDVFPTVVQLVGGEVPQDRVIDGHSLVPLLQGAEARSAHEFLFHYCGQHLHAARWHQKDSGSVWKVHYTTPQFHPEGAGACYGRGVCPCSGEGVTHHRPPLLFDLSRDPSEARPLTPDSEPLYHAVIARVGAAVSEHRQTLSPVPQQFSMSNILWKPWLQPCCGHFPFCSCHEDGDGTP</sequence>
<organism>
    <name type="scientific">Homo sapiens</name>
    <name type="common">Human</name>
    <dbReference type="NCBI Taxonomy" id="9606"/>
    <lineage>
        <taxon>Eukaryota</taxon>
        <taxon>Metazoa</taxon>
        <taxon>Chordata</taxon>
        <taxon>Craniata</taxon>
        <taxon>Vertebrata</taxon>
        <taxon>Euteleostomi</taxon>
        <taxon>Mammalia</taxon>
        <taxon>Eutheria</taxon>
        <taxon>Euarchontoglires</taxon>
        <taxon>Primates</taxon>
        <taxon>Haplorrhini</taxon>
        <taxon>Catarrhini</taxon>
        <taxon>Hominidae</taxon>
        <taxon>Homo</taxon>
    </lineage>
</organism>
<evidence type="ECO:0000250" key="1">
    <source>
        <dbReference type="UniProtKB" id="P15289"/>
    </source>
</evidence>
<evidence type="ECO:0000255" key="2"/>
<evidence type="ECO:0000269" key="3">
    <source>
    </source>
</evidence>
<evidence type="ECO:0000269" key="4">
    <source>
    </source>
</evidence>
<evidence type="ECO:0000303" key="5">
    <source>
    </source>
</evidence>
<evidence type="ECO:0000303" key="6">
    <source>
    </source>
</evidence>
<evidence type="ECO:0000305" key="7"/>
<reference key="1">
    <citation type="journal article" date="1995" name="Cell">
        <title>A cluster of sulfatase genes on Xp22.3: mutations in chondrodysplasia punctata (CDPX) and implications for warfarin embryopathy.</title>
        <authorList>
            <person name="Franco B."/>
            <person name="Meroni G."/>
            <person name="Parenti G."/>
            <person name="Levilliers J."/>
            <person name="Bernard L."/>
            <person name="Gebbia M."/>
            <person name="Cox L."/>
            <person name="Maroteaux P."/>
            <person name="Sheffield L."/>
            <person name="Rappold G.A."/>
            <person name="Andria G."/>
            <person name="Petit C."/>
            <person name="Ballabio A."/>
        </authorList>
    </citation>
    <scope>NUCLEOTIDE SEQUENCE [MRNA] (ISOFORM 3)</scope>
    <source>
        <tissue>Kidney</tissue>
    </source>
</reference>
<reference key="2">
    <citation type="journal article" date="2000" name="DNA Cell Biol.">
        <title>Arylsulfatase D gene in Xp22.3 encodes two protein isoforms.</title>
        <authorList>
            <person name="Urbitsch P."/>
            <person name="Salzer M.J."/>
            <person name="Hirschmann P."/>
            <person name="Vogt P.H."/>
        </authorList>
    </citation>
    <scope>NUCLEOTIDE SEQUENCE [MRNA] (ISOFORM 2)</scope>
    <scope>VARIANT CYS-224</scope>
    <source>
        <tissue>Testis</tissue>
    </source>
</reference>
<reference key="3">
    <citation type="journal article" date="2005" name="Nature">
        <title>The DNA sequence of the human X chromosome.</title>
        <authorList>
            <person name="Ross M.T."/>
            <person name="Grafham D.V."/>
            <person name="Coffey A.J."/>
            <person name="Scherer S."/>
            <person name="McLay K."/>
            <person name="Muzny D."/>
            <person name="Platzer M."/>
            <person name="Howell G.R."/>
            <person name="Burrows C."/>
            <person name="Bird C.P."/>
            <person name="Frankish A."/>
            <person name="Lovell F.L."/>
            <person name="Howe K.L."/>
            <person name="Ashurst J.L."/>
            <person name="Fulton R.S."/>
            <person name="Sudbrak R."/>
            <person name="Wen G."/>
            <person name="Jones M.C."/>
            <person name="Hurles M.E."/>
            <person name="Andrews T.D."/>
            <person name="Scott C.E."/>
            <person name="Searle S."/>
            <person name="Ramser J."/>
            <person name="Whittaker A."/>
            <person name="Deadman R."/>
            <person name="Carter N.P."/>
            <person name="Hunt S.E."/>
            <person name="Chen R."/>
            <person name="Cree A."/>
            <person name="Gunaratne P."/>
            <person name="Havlak P."/>
            <person name="Hodgson A."/>
            <person name="Metzker M.L."/>
            <person name="Richards S."/>
            <person name="Scott G."/>
            <person name="Steffen D."/>
            <person name="Sodergren E."/>
            <person name="Wheeler D.A."/>
            <person name="Worley K.C."/>
            <person name="Ainscough R."/>
            <person name="Ambrose K.D."/>
            <person name="Ansari-Lari M.A."/>
            <person name="Aradhya S."/>
            <person name="Ashwell R.I."/>
            <person name="Babbage A.K."/>
            <person name="Bagguley C.L."/>
            <person name="Ballabio A."/>
            <person name="Banerjee R."/>
            <person name="Barker G.E."/>
            <person name="Barlow K.F."/>
            <person name="Barrett I.P."/>
            <person name="Bates K.N."/>
            <person name="Beare D.M."/>
            <person name="Beasley H."/>
            <person name="Beasley O."/>
            <person name="Beck A."/>
            <person name="Bethel G."/>
            <person name="Blechschmidt K."/>
            <person name="Brady N."/>
            <person name="Bray-Allen S."/>
            <person name="Bridgeman A.M."/>
            <person name="Brown A.J."/>
            <person name="Brown M.J."/>
            <person name="Bonnin D."/>
            <person name="Bruford E.A."/>
            <person name="Buhay C."/>
            <person name="Burch P."/>
            <person name="Burford D."/>
            <person name="Burgess J."/>
            <person name="Burrill W."/>
            <person name="Burton J."/>
            <person name="Bye J.M."/>
            <person name="Carder C."/>
            <person name="Carrel L."/>
            <person name="Chako J."/>
            <person name="Chapman J.C."/>
            <person name="Chavez D."/>
            <person name="Chen E."/>
            <person name="Chen G."/>
            <person name="Chen Y."/>
            <person name="Chen Z."/>
            <person name="Chinault C."/>
            <person name="Ciccodicola A."/>
            <person name="Clark S.Y."/>
            <person name="Clarke G."/>
            <person name="Clee C.M."/>
            <person name="Clegg S."/>
            <person name="Clerc-Blankenburg K."/>
            <person name="Clifford K."/>
            <person name="Cobley V."/>
            <person name="Cole C.G."/>
            <person name="Conquer J.S."/>
            <person name="Corby N."/>
            <person name="Connor R.E."/>
            <person name="David R."/>
            <person name="Davies J."/>
            <person name="Davis C."/>
            <person name="Davis J."/>
            <person name="Delgado O."/>
            <person name="Deshazo D."/>
            <person name="Dhami P."/>
            <person name="Ding Y."/>
            <person name="Dinh H."/>
            <person name="Dodsworth S."/>
            <person name="Draper H."/>
            <person name="Dugan-Rocha S."/>
            <person name="Dunham A."/>
            <person name="Dunn M."/>
            <person name="Durbin K.J."/>
            <person name="Dutta I."/>
            <person name="Eades T."/>
            <person name="Ellwood M."/>
            <person name="Emery-Cohen A."/>
            <person name="Errington H."/>
            <person name="Evans K.L."/>
            <person name="Faulkner L."/>
            <person name="Francis F."/>
            <person name="Frankland J."/>
            <person name="Fraser A.E."/>
            <person name="Galgoczy P."/>
            <person name="Gilbert J."/>
            <person name="Gill R."/>
            <person name="Gloeckner G."/>
            <person name="Gregory S.G."/>
            <person name="Gribble S."/>
            <person name="Griffiths C."/>
            <person name="Grocock R."/>
            <person name="Gu Y."/>
            <person name="Gwilliam R."/>
            <person name="Hamilton C."/>
            <person name="Hart E.A."/>
            <person name="Hawes A."/>
            <person name="Heath P.D."/>
            <person name="Heitmann K."/>
            <person name="Hennig S."/>
            <person name="Hernandez J."/>
            <person name="Hinzmann B."/>
            <person name="Ho S."/>
            <person name="Hoffs M."/>
            <person name="Howden P.J."/>
            <person name="Huckle E.J."/>
            <person name="Hume J."/>
            <person name="Hunt P.J."/>
            <person name="Hunt A.R."/>
            <person name="Isherwood J."/>
            <person name="Jacob L."/>
            <person name="Johnson D."/>
            <person name="Jones S."/>
            <person name="de Jong P.J."/>
            <person name="Joseph S.S."/>
            <person name="Keenan S."/>
            <person name="Kelly S."/>
            <person name="Kershaw J.K."/>
            <person name="Khan Z."/>
            <person name="Kioschis P."/>
            <person name="Klages S."/>
            <person name="Knights A.J."/>
            <person name="Kosiura A."/>
            <person name="Kovar-Smith C."/>
            <person name="Laird G.K."/>
            <person name="Langford C."/>
            <person name="Lawlor S."/>
            <person name="Leversha M."/>
            <person name="Lewis L."/>
            <person name="Liu W."/>
            <person name="Lloyd C."/>
            <person name="Lloyd D.M."/>
            <person name="Loulseged H."/>
            <person name="Loveland J.E."/>
            <person name="Lovell J.D."/>
            <person name="Lozado R."/>
            <person name="Lu J."/>
            <person name="Lyne R."/>
            <person name="Ma J."/>
            <person name="Maheshwari M."/>
            <person name="Matthews L.H."/>
            <person name="McDowall J."/>
            <person name="McLaren S."/>
            <person name="McMurray A."/>
            <person name="Meidl P."/>
            <person name="Meitinger T."/>
            <person name="Milne S."/>
            <person name="Miner G."/>
            <person name="Mistry S.L."/>
            <person name="Morgan M."/>
            <person name="Morris S."/>
            <person name="Mueller I."/>
            <person name="Mullikin J.C."/>
            <person name="Nguyen N."/>
            <person name="Nordsiek G."/>
            <person name="Nyakatura G."/>
            <person name="O'dell C.N."/>
            <person name="Okwuonu G."/>
            <person name="Palmer S."/>
            <person name="Pandian R."/>
            <person name="Parker D."/>
            <person name="Parrish J."/>
            <person name="Pasternak S."/>
            <person name="Patel D."/>
            <person name="Pearce A.V."/>
            <person name="Pearson D.M."/>
            <person name="Pelan S.E."/>
            <person name="Perez L."/>
            <person name="Porter K.M."/>
            <person name="Ramsey Y."/>
            <person name="Reichwald K."/>
            <person name="Rhodes S."/>
            <person name="Ridler K.A."/>
            <person name="Schlessinger D."/>
            <person name="Schueler M.G."/>
            <person name="Sehra H.K."/>
            <person name="Shaw-Smith C."/>
            <person name="Shen H."/>
            <person name="Sheridan E.M."/>
            <person name="Shownkeen R."/>
            <person name="Skuce C.D."/>
            <person name="Smith M.L."/>
            <person name="Sotheran E.C."/>
            <person name="Steingruber H.E."/>
            <person name="Steward C.A."/>
            <person name="Storey R."/>
            <person name="Swann R.M."/>
            <person name="Swarbreck D."/>
            <person name="Tabor P.E."/>
            <person name="Taudien S."/>
            <person name="Taylor T."/>
            <person name="Teague B."/>
            <person name="Thomas K."/>
            <person name="Thorpe A."/>
            <person name="Timms K."/>
            <person name="Tracey A."/>
            <person name="Trevanion S."/>
            <person name="Tromans A.C."/>
            <person name="d'Urso M."/>
            <person name="Verduzco D."/>
            <person name="Villasana D."/>
            <person name="Waldron L."/>
            <person name="Wall M."/>
            <person name="Wang Q."/>
            <person name="Warren J."/>
            <person name="Warry G.L."/>
            <person name="Wei X."/>
            <person name="West A."/>
            <person name="Whitehead S.L."/>
            <person name="Whiteley M.N."/>
            <person name="Wilkinson J.E."/>
            <person name="Willey D.L."/>
            <person name="Williams G."/>
            <person name="Williams L."/>
            <person name="Williamson A."/>
            <person name="Williamson H."/>
            <person name="Wilming L."/>
            <person name="Woodmansey R.L."/>
            <person name="Wray P.W."/>
            <person name="Yen J."/>
            <person name="Zhang J."/>
            <person name="Zhou J."/>
            <person name="Zoghbi H."/>
            <person name="Zorilla S."/>
            <person name="Buck D."/>
            <person name="Reinhardt R."/>
            <person name="Poustka A."/>
            <person name="Rosenthal A."/>
            <person name="Lehrach H."/>
            <person name="Meindl A."/>
            <person name="Minx P.J."/>
            <person name="Hillier L.W."/>
            <person name="Willard H.F."/>
            <person name="Wilson R.K."/>
            <person name="Waterston R.H."/>
            <person name="Rice C.M."/>
            <person name="Vaudin M."/>
            <person name="Coulson A."/>
            <person name="Nelson D.L."/>
            <person name="Weinstock G."/>
            <person name="Sulston J.E."/>
            <person name="Durbin R.M."/>
            <person name="Hubbard T."/>
            <person name="Gibbs R.A."/>
            <person name="Beck S."/>
            <person name="Rogers J."/>
            <person name="Bentley D.R."/>
        </authorList>
    </citation>
    <scope>NUCLEOTIDE SEQUENCE [LARGE SCALE GENOMIC DNA]</scope>
</reference>
<reference key="4">
    <citation type="journal article" date="2004" name="Genome Res.">
        <title>The status, quality, and expansion of the NIH full-length cDNA project: the Mammalian Gene Collection (MGC).</title>
        <authorList>
            <consortium name="The MGC Project Team"/>
        </authorList>
    </citation>
    <scope>NUCLEOTIDE SEQUENCE [LARGE SCALE MRNA] (ISOFORM 1)</scope>
    <source>
        <tissue>Colon</tissue>
    </source>
</reference>
<reference key="5">
    <citation type="journal article" date="2009" name="J. Proteome Res.">
        <title>Glycoproteomics analysis of human liver tissue by combination of multiple enzyme digestion and hydrazide chemistry.</title>
        <authorList>
            <person name="Chen R."/>
            <person name="Jiang X."/>
            <person name="Sun D."/>
            <person name="Han G."/>
            <person name="Wang F."/>
            <person name="Ye M."/>
            <person name="Wang L."/>
            <person name="Zou H."/>
        </authorList>
    </citation>
    <scope>GLYCOSYLATION [LARGE SCALE ANALYSIS] AT ASN-347</scope>
    <source>
        <tissue>Liver</tissue>
    </source>
</reference>